<comment type="function">
    <text evidence="1">Involved in the biosynthesis of branched-chain amino acids (BCAA). Catalyzes an alkyl-migration followed by a ketol-acid reduction of (S)-2-acetolactate (S2AL) to yield (R)-2,3-dihydroxy-isovalerate. In the isomerase reaction, S2AL is rearranged via a Mg-dependent methyl migration to produce 3-hydroxy-3-methyl-2-ketobutyrate (HMKB). In the reductase reaction, this 2-ketoacid undergoes a metal-dependent reduction by NADPH to yield (R)-2,3-dihydroxy-isovalerate.</text>
</comment>
<comment type="catalytic activity">
    <reaction evidence="1">
        <text>(2R)-2,3-dihydroxy-3-methylbutanoate + NADP(+) = (2S)-2-acetolactate + NADPH + H(+)</text>
        <dbReference type="Rhea" id="RHEA:22068"/>
        <dbReference type="ChEBI" id="CHEBI:15378"/>
        <dbReference type="ChEBI" id="CHEBI:49072"/>
        <dbReference type="ChEBI" id="CHEBI:57783"/>
        <dbReference type="ChEBI" id="CHEBI:58349"/>
        <dbReference type="ChEBI" id="CHEBI:58476"/>
        <dbReference type="EC" id="1.1.1.86"/>
    </reaction>
</comment>
<comment type="catalytic activity">
    <reaction evidence="1">
        <text>(2R,3R)-2,3-dihydroxy-3-methylpentanoate + NADP(+) = (S)-2-ethyl-2-hydroxy-3-oxobutanoate + NADPH + H(+)</text>
        <dbReference type="Rhea" id="RHEA:13493"/>
        <dbReference type="ChEBI" id="CHEBI:15378"/>
        <dbReference type="ChEBI" id="CHEBI:49256"/>
        <dbReference type="ChEBI" id="CHEBI:49258"/>
        <dbReference type="ChEBI" id="CHEBI:57783"/>
        <dbReference type="ChEBI" id="CHEBI:58349"/>
        <dbReference type="EC" id="1.1.1.86"/>
    </reaction>
</comment>
<comment type="cofactor">
    <cofactor evidence="1">
        <name>Mg(2+)</name>
        <dbReference type="ChEBI" id="CHEBI:18420"/>
    </cofactor>
    <text evidence="1">Binds 2 magnesium ions per subunit.</text>
</comment>
<comment type="pathway">
    <text evidence="1">Amino-acid biosynthesis; L-isoleucine biosynthesis; L-isoleucine from 2-oxobutanoate: step 2/4.</text>
</comment>
<comment type="pathway">
    <text evidence="1">Amino-acid biosynthesis; L-valine biosynthesis; L-valine from pyruvate: step 2/4.</text>
</comment>
<comment type="similarity">
    <text evidence="1">Belongs to the ketol-acid reductoisomerase family.</text>
</comment>
<organism>
    <name type="scientific">Lysinibacillus sphaericus (strain C3-41)</name>
    <dbReference type="NCBI Taxonomy" id="444177"/>
    <lineage>
        <taxon>Bacteria</taxon>
        <taxon>Bacillati</taxon>
        <taxon>Bacillota</taxon>
        <taxon>Bacilli</taxon>
        <taxon>Bacillales</taxon>
        <taxon>Bacillaceae</taxon>
        <taxon>Lysinibacillus</taxon>
    </lineage>
</organism>
<evidence type="ECO:0000255" key="1">
    <source>
        <dbReference type="HAMAP-Rule" id="MF_00435"/>
    </source>
</evidence>
<evidence type="ECO:0000255" key="2">
    <source>
        <dbReference type="PROSITE-ProRule" id="PRU01197"/>
    </source>
</evidence>
<evidence type="ECO:0000255" key="3">
    <source>
        <dbReference type="PROSITE-ProRule" id="PRU01198"/>
    </source>
</evidence>
<reference key="1">
    <citation type="journal article" date="2008" name="J. Bacteriol.">
        <title>Complete genome sequence of the mosquitocidal bacterium Bacillus sphaericus C3-41 and comparison with those of closely related Bacillus species.</title>
        <authorList>
            <person name="Hu X."/>
            <person name="Fan W."/>
            <person name="Han B."/>
            <person name="Liu H."/>
            <person name="Zheng D."/>
            <person name="Li Q."/>
            <person name="Dong W."/>
            <person name="Yan J."/>
            <person name="Gao M."/>
            <person name="Berry C."/>
            <person name="Yuan Z."/>
        </authorList>
    </citation>
    <scope>NUCLEOTIDE SEQUENCE [LARGE SCALE GENOMIC DNA]</scope>
    <source>
        <strain>C3-41</strain>
    </source>
</reference>
<name>ILVC_LYSSC</name>
<keyword id="KW-0028">Amino-acid biosynthesis</keyword>
<keyword id="KW-0100">Branched-chain amino acid biosynthesis</keyword>
<keyword id="KW-0460">Magnesium</keyword>
<keyword id="KW-0479">Metal-binding</keyword>
<keyword id="KW-0521">NADP</keyword>
<keyword id="KW-0560">Oxidoreductase</keyword>
<feature type="chain" id="PRO_1000124305" description="Ketol-acid reductoisomerase (NADP(+))">
    <location>
        <begin position="1"/>
        <end position="344"/>
    </location>
</feature>
<feature type="domain" description="KARI N-terminal Rossmann" evidence="2">
    <location>
        <begin position="1"/>
        <end position="181"/>
    </location>
</feature>
<feature type="domain" description="KARI C-terminal knotted" evidence="3">
    <location>
        <begin position="182"/>
        <end position="327"/>
    </location>
</feature>
<feature type="active site" evidence="1">
    <location>
        <position position="107"/>
    </location>
</feature>
<feature type="binding site" evidence="1">
    <location>
        <begin position="25"/>
        <end position="28"/>
    </location>
    <ligand>
        <name>NADP(+)</name>
        <dbReference type="ChEBI" id="CHEBI:58349"/>
    </ligand>
</feature>
<feature type="binding site" evidence="1">
    <location>
        <position position="48"/>
    </location>
    <ligand>
        <name>NADP(+)</name>
        <dbReference type="ChEBI" id="CHEBI:58349"/>
    </ligand>
</feature>
<feature type="binding site" evidence="1">
    <location>
        <position position="52"/>
    </location>
    <ligand>
        <name>NADP(+)</name>
        <dbReference type="ChEBI" id="CHEBI:58349"/>
    </ligand>
</feature>
<feature type="binding site" evidence="1">
    <location>
        <begin position="82"/>
        <end position="85"/>
    </location>
    <ligand>
        <name>NADP(+)</name>
        <dbReference type="ChEBI" id="CHEBI:58349"/>
    </ligand>
</feature>
<feature type="binding site" evidence="1">
    <location>
        <position position="133"/>
    </location>
    <ligand>
        <name>NADP(+)</name>
        <dbReference type="ChEBI" id="CHEBI:58349"/>
    </ligand>
</feature>
<feature type="binding site" evidence="1">
    <location>
        <position position="190"/>
    </location>
    <ligand>
        <name>Mg(2+)</name>
        <dbReference type="ChEBI" id="CHEBI:18420"/>
        <label>1</label>
    </ligand>
</feature>
<feature type="binding site" evidence="1">
    <location>
        <position position="190"/>
    </location>
    <ligand>
        <name>Mg(2+)</name>
        <dbReference type="ChEBI" id="CHEBI:18420"/>
        <label>2</label>
    </ligand>
</feature>
<feature type="binding site" evidence="1">
    <location>
        <position position="194"/>
    </location>
    <ligand>
        <name>Mg(2+)</name>
        <dbReference type="ChEBI" id="CHEBI:18420"/>
        <label>1</label>
    </ligand>
</feature>
<feature type="binding site" evidence="1">
    <location>
        <position position="226"/>
    </location>
    <ligand>
        <name>Mg(2+)</name>
        <dbReference type="ChEBI" id="CHEBI:18420"/>
        <label>2</label>
    </ligand>
</feature>
<feature type="binding site" evidence="1">
    <location>
        <position position="230"/>
    </location>
    <ligand>
        <name>Mg(2+)</name>
        <dbReference type="ChEBI" id="CHEBI:18420"/>
        <label>2</label>
    </ligand>
</feature>
<feature type="binding site" evidence="1">
    <location>
        <position position="251"/>
    </location>
    <ligand>
        <name>substrate</name>
    </ligand>
</feature>
<sequence>MATMYYEQNINEEVLKGKKIAIIGYGSQGHAHALNLKESGFDVVVGVRPGGSFDAAKADGVDVKTVAEAAQEADVIQILLPDERQKAVYEAEIAPHLEAGKALMFAHGFNIHFGQITPPADVDVFLVAPKGPGHLVRRQFQEGAGVPGLFAIHQDATGQAKDLALAYGKGIGAARGGLLETTFKEETETDLFGEQAVLCGGATQLVKAGFETLVEAGYQPELAYFETLHELKLIVDLMFEGGMATMRYSVSDTAEWGDYVAGPRIIDESVKARMKDVLTDIQDGTFARRWIQENENGRPEYTKFKEAGANHQIEEVGAKLREMMPFINEGKEKVVREVATSAKN</sequence>
<proteinExistence type="inferred from homology"/>
<protein>
    <recommendedName>
        <fullName evidence="1">Ketol-acid reductoisomerase (NADP(+))</fullName>
        <shortName evidence="1">KARI</shortName>
        <ecNumber evidence="1">1.1.1.86</ecNumber>
    </recommendedName>
    <alternativeName>
        <fullName evidence="1">Acetohydroxy-acid isomeroreductase</fullName>
        <shortName evidence="1">AHIR</shortName>
    </alternativeName>
    <alternativeName>
        <fullName evidence="1">Alpha-keto-beta-hydroxylacyl reductoisomerase</fullName>
    </alternativeName>
    <alternativeName>
        <fullName evidence="1">Ketol-acid reductoisomerase type 1</fullName>
    </alternativeName>
    <alternativeName>
        <fullName evidence="1">Ketol-acid reductoisomerase type I</fullName>
    </alternativeName>
</protein>
<dbReference type="EC" id="1.1.1.86" evidence="1"/>
<dbReference type="EMBL" id="CP000817">
    <property type="protein sequence ID" value="ACA40879.1"/>
    <property type="molecule type" value="Genomic_DNA"/>
</dbReference>
<dbReference type="RefSeq" id="WP_012294943.1">
    <property type="nucleotide sequence ID" value="NC_010382.1"/>
</dbReference>
<dbReference type="SMR" id="B1HR99"/>
<dbReference type="EnsemblBacteria" id="ACA40879">
    <property type="protein sequence ID" value="ACA40879"/>
    <property type="gene ID" value="Bsph_3387"/>
</dbReference>
<dbReference type="KEGG" id="lsp:Bsph_3387"/>
<dbReference type="HOGENOM" id="CLU_033821_0_1_9"/>
<dbReference type="UniPathway" id="UPA00047">
    <property type="reaction ID" value="UER00056"/>
</dbReference>
<dbReference type="UniPathway" id="UPA00049">
    <property type="reaction ID" value="UER00060"/>
</dbReference>
<dbReference type="Proteomes" id="UP000002164">
    <property type="component" value="Chromosome"/>
</dbReference>
<dbReference type="GO" id="GO:0005829">
    <property type="term" value="C:cytosol"/>
    <property type="evidence" value="ECO:0007669"/>
    <property type="project" value="TreeGrafter"/>
</dbReference>
<dbReference type="GO" id="GO:0004455">
    <property type="term" value="F:ketol-acid reductoisomerase activity"/>
    <property type="evidence" value="ECO:0007669"/>
    <property type="project" value="UniProtKB-UniRule"/>
</dbReference>
<dbReference type="GO" id="GO:0000287">
    <property type="term" value="F:magnesium ion binding"/>
    <property type="evidence" value="ECO:0007669"/>
    <property type="project" value="UniProtKB-UniRule"/>
</dbReference>
<dbReference type="GO" id="GO:0050661">
    <property type="term" value="F:NADP binding"/>
    <property type="evidence" value="ECO:0007669"/>
    <property type="project" value="InterPro"/>
</dbReference>
<dbReference type="GO" id="GO:0009097">
    <property type="term" value="P:isoleucine biosynthetic process"/>
    <property type="evidence" value="ECO:0007669"/>
    <property type="project" value="UniProtKB-UniRule"/>
</dbReference>
<dbReference type="GO" id="GO:0009099">
    <property type="term" value="P:L-valine biosynthetic process"/>
    <property type="evidence" value="ECO:0007669"/>
    <property type="project" value="UniProtKB-UniRule"/>
</dbReference>
<dbReference type="FunFam" id="3.40.50.720:FF:000023">
    <property type="entry name" value="Ketol-acid reductoisomerase (NADP(+))"/>
    <property type="match status" value="1"/>
</dbReference>
<dbReference type="Gene3D" id="6.10.240.10">
    <property type="match status" value="1"/>
</dbReference>
<dbReference type="Gene3D" id="3.40.50.720">
    <property type="entry name" value="NAD(P)-binding Rossmann-like Domain"/>
    <property type="match status" value="1"/>
</dbReference>
<dbReference type="HAMAP" id="MF_00435">
    <property type="entry name" value="IlvC"/>
    <property type="match status" value="1"/>
</dbReference>
<dbReference type="InterPro" id="IPR008927">
    <property type="entry name" value="6-PGluconate_DH-like_C_sf"/>
</dbReference>
<dbReference type="InterPro" id="IPR013023">
    <property type="entry name" value="KARI"/>
</dbReference>
<dbReference type="InterPro" id="IPR000506">
    <property type="entry name" value="KARI_C"/>
</dbReference>
<dbReference type="InterPro" id="IPR013116">
    <property type="entry name" value="KARI_N"/>
</dbReference>
<dbReference type="InterPro" id="IPR014359">
    <property type="entry name" value="KARI_prok"/>
</dbReference>
<dbReference type="InterPro" id="IPR036291">
    <property type="entry name" value="NAD(P)-bd_dom_sf"/>
</dbReference>
<dbReference type="NCBIfam" id="TIGR00465">
    <property type="entry name" value="ilvC"/>
    <property type="match status" value="1"/>
</dbReference>
<dbReference type="NCBIfam" id="NF004017">
    <property type="entry name" value="PRK05479.1"/>
    <property type="match status" value="1"/>
</dbReference>
<dbReference type="NCBIfam" id="NF009940">
    <property type="entry name" value="PRK13403.1"/>
    <property type="match status" value="1"/>
</dbReference>
<dbReference type="PANTHER" id="PTHR21371">
    <property type="entry name" value="KETOL-ACID REDUCTOISOMERASE, MITOCHONDRIAL"/>
    <property type="match status" value="1"/>
</dbReference>
<dbReference type="PANTHER" id="PTHR21371:SF1">
    <property type="entry name" value="KETOL-ACID REDUCTOISOMERASE, MITOCHONDRIAL"/>
    <property type="match status" value="1"/>
</dbReference>
<dbReference type="Pfam" id="PF01450">
    <property type="entry name" value="KARI_C"/>
    <property type="match status" value="1"/>
</dbReference>
<dbReference type="Pfam" id="PF07991">
    <property type="entry name" value="KARI_N"/>
    <property type="match status" value="1"/>
</dbReference>
<dbReference type="PIRSF" id="PIRSF000116">
    <property type="entry name" value="IlvC_gammaproteo"/>
    <property type="match status" value="1"/>
</dbReference>
<dbReference type="SUPFAM" id="SSF48179">
    <property type="entry name" value="6-phosphogluconate dehydrogenase C-terminal domain-like"/>
    <property type="match status" value="1"/>
</dbReference>
<dbReference type="SUPFAM" id="SSF51735">
    <property type="entry name" value="NAD(P)-binding Rossmann-fold domains"/>
    <property type="match status" value="1"/>
</dbReference>
<dbReference type="PROSITE" id="PS51851">
    <property type="entry name" value="KARI_C"/>
    <property type="match status" value="1"/>
</dbReference>
<dbReference type="PROSITE" id="PS51850">
    <property type="entry name" value="KARI_N"/>
    <property type="match status" value="1"/>
</dbReference>
<accession>B1HR99</accession>
<gene>
    <name evidence="1" type="primary">ilvC</name>
    <name type="ordered locus">Bsph_3387</name>
</gene>